<feature type="chain" id="PRO_0000207533" description="DUP240 protein DFP4">
    <location>
        <begin position="1"/>
        <end position="235"/>
    </location>
</feature>
<feature type="topological domain" description="Cytoplasmic" evidence="1">
    <location>
        <begin position="1"/>
        <end position="44"/>
    </location>
</feature>
<feature type="transmembrane region" description="Helical" evidence="1">
    <location>
        <begin position="45"/>
        <end position="65"/>
    </location>
</feature>
<feature type="topological domain" description="Extracellular" evidence="1">
    <location>
        <begin position="66"/>
        <end position="72"/>
    </location>
</feature>
<feature type="transmembrane region" description="Helical" evidence="1">
    <location>
        <begin position="73"/>
        <end position="93"/>
    </location>
</feature>
<feature type="topological domain" description="Cytoplasmic" evidence="1">
    <location>
        <begin position="94"/>
        <end position="235"/>
    </location>
</feature>
<feature type="sequence variant" description="In strain: CLIB 95, CLIB 219, CLIB 382, CLIB 388, CLIB 410, CLIB 413, CLIB 556, CLIB 630, K1, R12, R13, YIIc12 and YIIc17." evidence="3">
    <original>N</original>
    <variation>D</variation>
    <location>
        <position position="9"/>
    </location>
</feature>
<feature type="sequence variant" description="In strain: CLIB 219, CLIB 388, CLIB 410, CLIB 413, CLIB 556, CLIB 630, YIIc12 haplotype Ha2 and YIIc17 haplotype Ha2." evidence="3">
    <original>F</original>
    <variation>L</variation>
    <location>
        <position position="47"/>
    </location>
</feature>
<feature type="sequence variant" description="In strain: CLIB 95, CLIB 382, CLIB 556 haplotype Ha1, K1, R12, R13, YIIc12 haplotype Ha1 and YIIc17 haplotype Ha1." evidence="3">
    <original>I</original>
    <variation>V</variation>
    <location>
        <position position="75"/>
    </location>
</feature>
<feature type="sequence variant" description="In strain: CLIB 388.">
    <original>L</original>
    <variation>F</variation>
    <location>
        <position position="77"/>
    </location>
</feature>
<feature type="sequence variant" description="In strain: CLIB 388." evidence="3">
    <original>L</original>
    <variation>P</variation>
    <location>
        <position position="86"/>
    </location>
</feature>
<feature type="sequence variant" description="In strain: CLIB 95, CLIB 219, CLIB 382, CLIB 388, CLIB 410, CLIB 413, CLIB 556, CLIB 630, K1, R12, R13, YIIc12 and YIIc17." evidence="3">
    <original>S</original>
    <variation>N</variation>
    <location>
        <position position="96"/>
    </location>
</feature>
<feature type="sequence variant" description="In strain: CLIB 388, CLIB 410, CLIB 556 haplotype Ha2, CLIB 630, YIIc12 haplotype Ha2 and YIIc17 haplotype Ha2." evidence="3">
    <original>R</original>
    <variation>T</variation>
    <location>
        <position position="103"/>
    </location>
</feature>
<feature type="sequence variant" description="In strain: CLIB 95, CLIB 219, CLIB 382, CLIB 388, CLIB 410, CLIB 413, CLIB 556, CLIB 630, K1, R12, R13, YIIc12 and YIIc17." evidence="3">
    <original>M</original>
    <variation>V</variation>
    <location>
        <position position="124"/>
    </location>
</feature>
<feature type="sequence variant" description="In strain: R12 haplotype Ha2." evidence="3">
    <original>I</original>
    <variation>M</variation>
    <location>
        <position position="145"/>
    </location>
</feature>
<feature type="sequence variant" description="In strain: CLIB 95, CLIB 219, CLIB 382, CLIB 388, CLIB 410, CLIB 413, CLIB 556, CLIB 630, K1, R12, R13, YIIc12 and YIIc17." evidence="3">
    <original>Y</original>
    <variation>S</variation>
    <location>
        <position position="157"/>
    </location>
</feature>
<feature type="sequence variant" description="In strain: CLIB 556 haplotype Ha1." evidence="3">
    <original>Q</original>
    <variation>R</variation>
    <location>
        <position position="160"/>
    </location>
</feature>
<feature type="sequence variant" description="In strain: CLIB 95, CLIB 382, K1, R12, R13, YIIc12 haplotype Ha1 and YIIc17 haplotype Ha1." evidence="3">
    <original>Y</original>
    <variation>D</variation>
    <location>
        <position position="180"/>
    </location>
</feature>
<feature type="sequence variant" description="In strain: CLIB 95, CLIB 219, CLIB 382, CLIB 388, CLIB 410, CLIB 413, CLIB 556, CLIB 630, K1, R12, R13, YIIc12 and YIIc17." evidence="3">
    <original>G</original>
    <variation>A</variation>
    <location>
        <position position="189"/>
    </location>
</feature>
<feature type="sequence variant" description="In strain: CLIB 630.">
    <original>EDKYPEMGVTV</original>
    <variation>RISIQRWGTQF</variation>
    <location>
        <begin position="225"/>
        <end position="235"/>
    </location>
</feature>
<feature type="sequence variant" description="In strain: CLIB 219, CLIB 388, CLIB 410, CLIB 413, CLIB 556, CLIB 630, YIIc12 haplotype Ha2 and YIIc17 haplotype Ha2." evidence="3">
    <original>V</original>
    <variation>D</variation>
    <location>
        <position position="233"/>
    </location>
</feature>
<feature type="sequence variant" description="In strain: CLIB 413 haplotype Ha1." evidence="3">
    <original>T</original>
    <variation>I</variation>
    <location>
        <position position="234"/>
    </location>
</feature>
<organism>
    <name type="scientific">Saccharomyces cerevisiae (strain ATCC 204508 / S288c)</name>
    <name type="common">Baker's yeast</name>
    <dbReference type="NCBI Taxonomy" id="559292"/>
    <lineage>
        <taxon>Eukaryota</taxon>
        <taxon>Fungi</taxon>
        <taxon>Dikarya</taxon>
        <taxon>Ascomycota</taxon>
        <taxon>Saccharomycotina</taxon>
        <taxon>Saccharomycetes</taxon>
        <taxon>Saccharomycetales</taxon>
        <taxon>Saccharomycetaceae</taxon>
        <taxon>Saccharomyces</taxon>
    </lineage>
</organism>
<reference key="1">
    <citation type="journal article" date="2004" name="Nucleic Acids Res.">
        <title>Differential evolution of the Saccharomyces cerevisiae DUP240 paralogs and implication of recombination in phylogeny.</title>
        <authorList>
            <person name="Leh-Louis V."/>
            <person name="Wirth B."/>
            <person name="Despons L."/>
            <person name="Wain-Hobson S."/>
            <person name="Potier S."/>
            <person name="Souciet J.-L."/>
        </authorList>
    </citation>
    <scope>NUCLEOTIDE SEQUENCE [GENOMIC DNA]</scope>
    <scope>VARIANTS ASP-9; LEU-47; VAL-75; PRO-86; ASN-96; THR-103; VAL-124; MET-145; SER-157; ARG-160; ASP-180; ALA-189; ASP-233 AND ILE-234</scope>
    <source>
        <strain>CLIB 219</strain>
        <strain>CLIB 382</strain>
        <strain>CLIB 388</strain>
        <strain>CLIB 410</strain>
        <strain>CLIB 413</strain>
        <strain>CLIB 556</strain>
        <strain>CLIB 630</strain>
        <strain>CLIB 95</strain>
        <strain>K1</strain>
        <strain>R12</strain>
        <strain>R13</strain>
        <strain>Sigma 1278B</strain>
        <strain>YIIc12</strain>
        <strain>YIIc17</strain>
    </source>
</reference>
<reference key="2">
    <citation type="journal article" date="1994" name="Science">
        <title>Complete nucleotide sequence of Saccharomyces cerevisiae chromosome VIII.</title>
        <authorList>
            <person name="Johnston M."/>
            <person name="Andrews S."/>
            <person name="Brinkman R."/>
            <person name="Cooper J."/>
            <person name="Ding H."/>
            <person name="Dover J."/>
            <person name="Du Z."/>
            <person name="Favello A."/>
            <person name="Fulton L."/>
            <person name="Gattung S."/>
            <person name="Geisel C."/>
            <person name="Kirsten J."/>
            <person name="Kucaba T."/>
            <person name="Hillier L.W."/>
            <person name="Jier M."/>
            <person name="Johnston L."/>
            <person name="Langston Y."/>
            <person name="Latreille P."/>
            <person name="Louis E.J."/>
            <person name="Macri C."/>
            <person name="Mardis E."/>
            <person name="Menezes S."/>
            <person name="Mouser L."/>
            <person name="Nhan M."/>
            <person name="Rifkin L."/>
            <person name="Riles L."/>
            <person name="St Peter H."/>
            <person name="Trevaskis E."/>
            <person name="Vaughan K."/>
            <person name="Vignati D."/>
            <person name="Wilcox L."/>
            <person name="Wohldman P."/>
            <person name="Waterston R."/>
            <person name="Wilson R."/>
            <person name="Vaudin M."/>
        </authorList>
    </citation>
    <scope>NUCLEOTIDE SEQUENCE [LARGE SCALE GENOMIC DNA]</scope>
    <source>
        <strain>ATCC 204508 / S288c</strain>
    </source>
</reference>
<reference key="3">
    <citation type="journal article" date="2014" name="G3 (Bethesda)">
        <title>The reference genome sequence of Saccharomyces cerevisiae: Then and now.</title>
        <authorList>
            <person name="Engel S.R."/>
            <person name="Dietrich F.S."/>
            <person name="Fisk D.G."/>
            <person name="Binkley G."/>
            <person name="Balakrishnan R."/>
            <person name="Costanzo M.C."/>
            <person name="Dwight S.S."/>
            <person name="Hitz B.C."/>
            <person name="Karra K."/>
            <person name="Nash R.S."/>
            <person name="Weng S."/>
            <person name="Wong E.D."/>
            <person name="Lloyd P."/>
            <person name="Skrzypek M.S."/>
            <person name="Miyasato S.R."/>
            <person name="Simison M."/>
            <person name="Cherry J.M."/>
        </authorList>
    </citation>
    <scope>GENOME REANNOTATION</scope>
    <source>
        <strain>ATCC 204508 / S288c</strain>
    </source>
</reference>
<reference key="4">
    <citation type="journal article" date="2001" name="Proc. Natl. Acad. Sci. U.S.A.">
        <title>A comprehensive two-hybrid analysis to explore the yeast protein interactome.</title>
        <authorList>
            <person name="Ito T."/>
            <person name="Chiba T."/>
            <person name="Ozawa R."/>
            <person name="Yoshida M."/>
            <person name="Hattori M."/>
            <person name="Sakaki Y."/>
        </authorList>
    </citation>
    <scope>INTERACTION WITH BZZ1; SRB4 AND SUA7</scope>
</reference>
<reference key="5">
    <citation type="journal article" date="2002" name="Microbiology">
        <title>Functional analysis of the Saccharomyces cerevisiae DUP240 multigene family reveals membrane-associated proteins that are not essential for cell viability.</title>
        <authorList>
            <person name="Poirey R."/>
            <person name="Despons L."/>
            <person name="Leh V."/>
            <person name="Lafuente M.-J."/>
            <person name="Potier S."/>
            <person name="Souciet J.-L."/>
            <person name="Jauniaux J.-C."/>
        </authorList>
    </citation>
    <scope>SUBCELLULAR LOCATION</scope>
    <scope>DISRUPTION PHENOTYPE</scope>
</reference>
<reference key="6">
    <citation type="journal article" date="2006" name="Proc. Natl. Acad. Sci. U.S.A.">
        <title>A global topology map of the Saccharomyces cerevisiae membrane proteome.</title>
        <authorList>
            <person name="Kim H."/>
            <person name="Melen K."/>
            <person name="Oesterberg M."/>
            <person name="von Heijne G."/>
        </authorList>
    </citation>
    <scope>TOPOLOGY [LARGE SCALE ANALYSIS]</scope>
    <source>
        <strain>ATCC 208353 / W303-1A</strain>
    </source>
</reference>
<evidence type="ECO:0000255" key="1"/>
<evidence type="ECO:0000269" key="2">
    <source>
    </source>
</evidence>
<evidence type="ECO:0000269" key="3">
    <source>
    </source>
</evidence>
<evidence type="ECO:0000305" key="4"/>
<evidence type="ECO:0000312" key="5">
    <source>
        <dbReference type="SGD" id="S000001036"/>
    </source>
</evidence>
<keyword id="KW-1003">Cell membrane</keyword>
<keyword id="KW-0472">Membrane</keyword>
<keyword id="KW-1185">Reference proteome</keyword>
<keyword id="KW-0812">Transmembrane</keyword>
<keyword id="KW-1133">Transmembrane helix</keyword>
<name>YHE4_YEAST</name>
<gene>
    <name evidence="5" type="primary">DFP4</name>
    <name type="ordered locus">YHL044W</name>
</gene>
<proteinExistence type="evidence at protein level"/>
<comment type="subunit">
    <text evidence="4">Interacts according to large scale protein interaction studies with BZZ1, SRB4 and SUA7.</text>
</comment>
<comment type="subcellular location">
    <subcellularLocation>
        <location evidence="2">Cell membrane</location>
        <topology evidence="2">Multi-pass membrane protein</topology>
    </subcellularLocation>
</comment>
<comment type="disruption phenotype">
    <text evidence="2">Cells lacking all 10 proteins of the DUP240 multigene family show no obvious alterations in mating, sporulation and cell growth.</text>
</comment>
<comment type="similarity">
    <text evidence="4">Belongs to the DUP/COS family.</text>
</comment>
<protein>
    <recommendedName>
        <fullName>DUP240 protein DFP4</fullName>
    </recommendedName>
</protein>
<dbReference type="EMBL" id="AJ585565">
    <property type="protein sequence ID" value="CAE52085.1"/>
    <property type="molecule type" value="Genomic_DNA"/>
</dbReference>
<dbReference type="EMBL" id="AJ585566">
    <property type="protein sequence ID" value="CAE52086.1"/>
    <property type="molecule type" value="Genomic_DNA"/>
</dbReference>
<dbReference type="EMBL" id="AJ585567">
    <property type="protein sequence ID" value="CAE52087.1"/>
    <property type="molecule type" value="Genomic_DNA"/>
</dbReference>
<dbReference type="EMBL" id="AJ585568">
    <property type="protein sequence ID" value="CAE52088.1"/>
    <property type="molecule type" value="Genomic_DNA"/>
</dbReference>
<dbReference type="EMBL" id="AJ585569">
    <property type="protein sequence ID" value="CAE52089.1"/>
    <property type="molecule type" value="Genomic_DNA"/>
</dbReference>
<dbReference type="EMBL" id="AJ585570">
    <property type="protein sequence ID" value="CAE52090.1"/>
    <property type="molecule type" value="Genomic_DNA"/>
</dbReference>
<dbReference type="EMBL" id="AJ585571">
    <property type="protein sequence ID" value="CAE52091.1"/>
    <property type="molecule type" value="Genomic_DNA"/>
</dbReference>
<dbReference type="EMBL" id="AJ585572">
    <property type="protein sequence ID" value="CAE52092.1"/>
    <property type="molecule type" value="Genomic_DNA"/>
</dbReference>
<dbReference type="EMBL" id="AJ585573">
    <property type="protein sequence ID" value="CAE52093.1"/>
    <property type="molecule type" value="Genomic_DNA"/>
</dbReference>
<dbReference type="EMBL" id="AJ585574">
    <property type="protein sequence ID" value="CAE52094.1"/>
    <property type="molecule type" value="Genomic_DNA"/>
</dbReference>
<dbReference type="EMBL" id="AJ585575">
    <property type="protein sequence ID" value="CAE52095.1"/>
    <property type="molecule type" value="Genomic_DNA"/>
</dbReference>
<dbReference type="EMBL" id="AJ585576">
    <property type="protein sequence ID" value="CAE52096.1"/>
    <property type="molecule type" value="Genomic_DNA"/>
</dbReference>
<dbReference type="EMBL" id="AJ585577">
    <property type="protein sequence ID" value="CAE52097.1"/>
    <property type="molecule type" value="Genomic_DNA"/>
</dbReference>
<dbReference type="EMBL" id="AJ585578">
    <property type="protein sequence ID" value="CAE52098.1"/>
    <property type="molecule type" value="Genomic_DNA"/>
</dbReference>
<dbReference type="EMBL" id="AJ585579">
    <property type="protein sequence ID" value="CAE52099.1"/>
    <property type="molecule type" value="Genomic_DNA"/>
</dbReference>
<dbReference type="EMBL" id="AJ585580">
    <property type="protein sequence ID" value="CAE52100.1"/>
    <property type="molecule type" value="Genomic_DNA"/>
</dbReference>
<dbReference type="EMBL" id="AJ585581">
    <property type="protein sequence ID" value="CAE52101.1"/>
    <property type="molecule type" value="Genomic_DNA"/>
</dbReference>
<dbReference type="EMBL" id="AJ585582">
    <property type="protein sequence ID" value="CAE52102.1"/>
    <property type="molecule type" value="Genomic_DNA"/>
</dbReference>
<dbReference type="EMBL" id="AJ585755">
    <property type="protein sequence ID" value="CAE52275.1"/>
    <property type="molecule type" value="Genomic_DNA"/>
</dbReference>
<dbReference type="EMBL" id="U11583">
    <property type="protein sequence ID" value="AAB65056.1"/>
    <property type="molecule type" value="Genomic_DNA"/>
</dbReference>
<dbReference type="EMBL" id="BK006934">
    <property type="protein sequence ID" value="DAA06643.1"/>
    <property type="molecule type" value="Genomic_DNA"/>
</dbReference>
<dbReference type="PIR" id="S48924">
    <property type="entry name" value="S48924"/>
</dbReference>
<dbReference type="RefSeq" id="NP_011819.1">
    <property type="nucleotide sequence ID" value="NM_001179124.1"/>
</dbReference>
<dbReference type="BioGRID" id="36380">
    <property type="interactions" value="19"/>
</dbReference>
<dbReference type="DIP" id="DIP-2089N"/>
<dbReference type="FunCoup" id="P38727">
    <property type="interactions" value="42"/>
</dbReference>
<dbReference type="STRING" id="4932.YHL044W"/>
<dbReference type="PaxDb" id="4932-YHL044W"/>
<dbReference type="EnsemblFungi" id="YHL044W_mRNA">
    <property type="protein sequence ID" value="YHL044W"/>
    <property type="gene ID" value="YHL044W"/>
</dbReference>
<dbReference type="GeneID" id="856341"/>
<dbReference type="KEGG" id="sce:YHL044W"/>
<dbReference type="AGR" id="SGD:S000001036"/>
<dbReference type="SGD" id="S000001036">
    <property type="gene designation" value="DFP4"/>
</dbReference>
<dbReference type="VEuPathDB" id="FungiDB:YHL044W"/>
<dbReference type="GeneTree" id="ENSGT00940000176285"/>
<dbReference type="HOGENOM" id="CLU_081384_1_0_1"/>
<dbReference type="InParanoid" id="P38727"/>
<dbReference type="OMA" id="DITPSKC"/>
<dbReference type="OrthoDB" id="4056488at2759"/>
<dbReference type="BioCyc" id="YEAST:G3O-31061-MONOMER"/>
<dbReference type="BioGRID-ORCS" id="856341">
    <property type="hits" value="0 hits in 10 CRISPR screens"/>
</dbReference>
<dbReference type="PRO" id="PR:P38727"/>
<dbReference type="Proteomes" id="UP000002311">
    <property type="component" value="Chromosome VIII"/>
</dbReference>
<dbReference type="RNAct" id="P38727">
    <property type="molecule type" value="protein"/>
</dbReference>
<dbReference type="GO" id="GO:0005886">
    <property type="term" value="C:plasma membrane"/>
    <property type="evidence" value="ECO:0000315"/>
    <property type="project" value="SGD"/>
</dbReference>
<dbReference type="InterPro" id="IPR001142">
    <property type="entry name" value="DUP/COS"/>
</dbReference>
<dbReference type="Pfam" id="PF00674">
    <property type="entry name" value="DUP"/>
    <property type="match status" value="1"/>
</dbReference>
<sequence>MSSELLISNSKPRPEGLRKLCEGETVILPRDITPSKCAYFLKQNIVFISYIFIHIIITIILNRLALSAHGNTLIIILAALLITISLFLLLLLPYLSCSRYKLRCLDDDCKFKLLAEVITHKPNMDLSTWDRIAYDMNQFVYDRRICADRSFFYDGSYCYQVFKKLVATPYLVNSNMNSIYADLEMRSNGATNINDSGNSSLHIELGTYIFKALAVFRNSVDKYWEDKYPEMGVTV</sequence>
<accession>P38727</accession>
<accession>D3DKS6</accession>
<accession>Q70D60</accession>
<accession>Q70DF5</accession>
<accession>Q70DF7</accession>
<accession>Q70DF9</accession>
<accession>Q70DG3</accession>
<accession>Q70DG4</accession>
<accession>Q70DG5</accession>
<accession>Q70DG6</accession>
<accession>Q70DG7</accession>